<name>NDUA5_MOUSE</name>
<evidence type="ECO:0000250" key="1">
    <source>
        <dbReference type="UniProtKB" id="P23935"/>
    </source>
</evidence>
<evidence type="ECO:0000250" key="2">
    <source>
        <dbReference type="UniProtKB" id="Q16718"/>
    </source>
</evidence>
<evidence type="ECO:0000250" key="3">
    <source>
        <dbReference type="UniProtKB" id="Q63362"/>
    </source>
</evidence>
<evidence type="ECO:0000269" key="4">
    <source>
    </source>
</evidence>
<evidence type="ECO:0000269" key="5">
    <source>
    </source>
</evidence>
<evidence type="ECO:0000305" key="6"/>
<evidence type="ECO:0007744" key="7">
    <source>
        <dbReference type="PDB" id="8PW5"/>
    </source>
</evidence>
<evidence type="ECO:0007744" key="8">
    <source>
    </source>
</evidence>
<evidence type="ECO:0007744" key="9">
    <source>
    </source>
</evidence>
<evidence type="ECO:0007829" key="10">
    <source>
        <dbReference type="PDB" id="6G2J"/>
    </source>
</evidence>
<evidence type="ECO:0007829" key="11">
    <source>
        <dbReference type="PDB" id="6ZR2"/>
    </source>
</evidence>
<evidence type="ECO:0007829" key="12">
    <source>
        <dbReference type="PDB" id="8OM1"/>
    </source>
</evidence>
<dbReference type="EMBL" id="AK008156">
    <property type="protein sequence ID" value="BAB25499.1"/>
    <property type="molecule type" value="mRNA"/>
</dbReference>
<dbReference type="EMBL" id="AK008286">
    <property type="protein sequence ID" value="BAB25577.1"/>
    <property type="molecule type" value="mRNA"/>
</dbReference>
<dbReference type="EMBL" id="AK008414">
    <property type="protein sequence ID" value="BAB25655.1"/>
    <property type="molecule type" value="mRNA"/>
</dbReference>
<dbReference type="EMBL" id="AK009338">
    <property type="protein sequence ID" value="BAB26226.1"/>
    <property type="molecule type" value="mRNA"/>
</dbReference>
<dbReference type="EMBL" id="AK009396">
    <property type="protein sequence ID" value="BAB26263.1"/>
    <property type="molecule type" value="mRNA"/>
</dbReference>
<dbReference type="EMBL" id="AK009461">
    <property type="protein sequence ID" value="BAB26302.1"/>
    <property type="molecule type" value="mRNA"/>
</dbReference>
<dbReference type="EMBL" id="AK009493">
    <property type="protein sequence ID" value="BAB26323.1"/>
    <property type="molecule type" value="mRNA"/>
</dbReference>
<dbReference type="EMBL" id="AK009608">
    <property type="protein sequence ID" value="BAB26389.1"/>
    <property type="molecule type" value="mRNA"/>
</dbReference>
<dbReference type="EMBL" id="AK009642">
    <property type="protein sequence ID" value="BAB26409.1"/>
    <property type="molecule type" value="mRNA"/>
</dbReference>
<dbReference type="EMBL" id="AK009652">
    <property type="protein sequence ID" value="BAB26416.1"/>
    <property type="molecule type" value="mRNA"/>
</dbReference>
<dbReference type="EMBL" id="AK009775">
    <property type="protein sequence ID" value="BAB26496.1"/>
    <property type="molecule type" value="mRNA"/>
</dbReference>
<dbReference type="EMBL" id="AK009840">
    <property type="protein sequence ID" value="BAB26535.1"/>
    <property type="molecule type" value="mRNA"/>
</dbReference>
<dbReference type="EMBL" id="AK009985">
    <property type="protein sequence ID" value="BAB26627.1"/>
    <property type="molecule type" value="mRNA"/>
</dbReference>
<dbReference type="EMBL" id="AK010024">
    <property type="protein sequence ID" value="BAB26649.1"/>
    <property type="molecule type" value="mRNA"/>
</dbReference>
<dbReference type="EMBL" id="AK010090">
    <property type="protein sequence ID" value="BAB26695.1"/>
    <property type="molecule type" value="mRNA"/>
</dbReference>
<dbReference type="EMBL" id="AK010092">
    <property type="protein sequence ID" value="BAB26696.1"/>
    <property type="molecule type" value="mRNA"/>
</dbReference>
<dbReference type="EMBL" id="AK011579">
    <property type="protein sequence ID" value="BAB27713.1"/>
    <property type="molecule type" value="mRNA"/>
</dbReference>
<dbReference type="EMBL" id="AK011947">
    <property type="protein sequence ID" value="BAB27932.1"/>
    <property type="molecule type" value="mRNA"/>
</dbReference>
<dbReference type="EMBL" id="AK019084">
    <property type="protein sequence ID" value="BAB31537.1"/>
    <property type="molecule type" value="mRNA"/>
</dbReference>
<dbReference type="EMBL" id="AK019201">
    <property type="protein sequence ID" value="BAB31598.1"/>
    <property type="molecule type" value="mRNA"/>
</dbReference>
<dbReference type="EMBL" id="AK019207">
    <property type="protein sequence ID" value="BAB31601.1"/>
    <property type="molecule type" value="mRNA"/>
</dbReference>
<dbReference type="EMBL" id="AK019215">
    <property type="protein sequence ID" value="BAB31606.1"/>
    <property type="molecule type" value="mRNA"/>
</dbReference>
<dbReference type="EMBL" id="AK019242">
    <property type="protein sequence ID" value="BAB31622.1"/>
    <property type="molecule type" value="mRNA"/>
</dbReference>
<dbReference type="EMBL" id="AK019245">
    <property type="protein sequence ID" value="BAB31624.1"/>
    <property type="molecule type" value="mRNA"/>
</dbReference>
<dbReference type="EMBL" id="AK019291">
    <property type="protein sequence ID" value="BAB31650.1"/>
    <property type="molecule type" value="mRNA"/>
</dbReference>
<dbReference type="EMBL" id="AK019301">
    <property type="protein sequence ID" value="BAB31656.1"/>
    <property type="molecule type" value="mRNA"/>
</dbReference>
<dbReference type="EMBL" id="AK019324">
    <property type="protein sequence ID" value="BAB31667.1"/>
    <property type="molecule type" value="mRNA"/>
</dbReference>
<dbReference type="EMBL" id="AK019354">
    <property type="protein sequence ID" value="BAB31675.1"/>
    <property type="molecule type" value="mRNA"/>
</dbReference>
<dbReference type="EMBL" id="AK019359">
    <property type="protein sequence ID" value="BAB31678.1"/>
    <property type="molecule type" value="mRNA"/>
</dbReference>
<dbReference type="EMBL" id="AK019364">
    <property type="protein sequence ID" value="BAB31681.1"/>
    <property type="molecule type" value="mRNA"/>
</dbReference>
<dbReference type="EMBL" id="AK019368">
    <property type="protein sequence ID" value="BAB31682.1"/>
    <property type="molecule type" value="mRNA"/>
</dbReference>
<dbReference type="EMBL" id="BC028633">
    <property type="protein sequence ID" value="AAH28633.1"/>
    <property type="molecule type" value="mRNA"/>
</dbReference>
<dbReference type="CCDS" id="CCDS19942.1"/>
<dbReference type="RefSeq" id="NP_080890.1">
    <property type="nucleotide sequence ID" value="NM_026614.3"/>
</dbReference>
<dbReference type="PDB" id="6G2J">
    <property type="method" value="EM"/>
    <property type="resolution" value="3.30 A"/>
    <property type="chains" value="V=1-116"/>
</dbReference>
<dbReference type="PDB" id="6G72">
    <property type="method" value="EM"/>
    <property type="resolution" value="3.90 A"/>
    <property type="chains" value="V=1-116"/>
</dbReference>
<dbReference type="PDB" id="6ZR2">
    <property type="method" value="EM"/>
    <property type="resolution" value="3.10 A"/>
    <property type="chains" value="V=1-116"/>
</dbReference>
<dbReference type="PDB" id="6ZTQ">
    <property type="method" value="EM"/>
    <property type="resolution" value="3.00 A"/>
    <property type="chains" value="V=1-116"/>
</dbReference>
<dbReference type="PDB" id="7AK5">
    <property type="method" value="EM"/>
    <property type="resolution" value="3.17 A"/>
    <property type="chains" value="V=1-116"/>
</dbReference>
<dbReference type="PDB" id="7AK6">
    <property type="method" value="EM"/>
    <property type="resolution" value="3.82 A"/>
    <property type="chains" value="V=1-116"/>
</dbReference>
<dbReference type="PDB" id="7B93">
    <property type="method" value="EM"/>
    <property type="resolution" value="3.04 A"/>
    <property type="chains" value="V=1-116"/>
</dbReference>
<dbReference type="PDB" id="7PSA">
    <property type="method" value="EM"/>
    <property type="resolution" value="3.40 A"/>
    <property type="chains" value="V=1-116"/>
</dbReference>
<dbReference type="PDB" id="8C2S">
    <property type="method" value="EM"/>
    <property type="resolution" value="3.90 A"/>
    <property type="chains" value="V=1-116"/>
</dbReference>
<dbReference type="PDB" id="8CA3">
    <property type="method" value="EM"/>
    <property type="resolution" value="3.20 A"/>
    <property type="chains" value="V=1-116"/>
</dbReference>
<dbReference type="PDB" id="8CA5">
    <property type="method" value="EM"/>
    <property type="resolution" value="3.90 A"/>
    <property type="chains" value="V=1-116"/>
</dbReference>
<dbReference type="PDB" id="8IAO">
    <property type="method" value="EM"/>
    <property type="resolution" value="4.20 A"/>
    <property type="chains" value="V=1-116"/>
</dbReference>
<dbReference type="PDB" id="8IAP">
    <property type="method" value="EM"/>
    <property type="resolution" value="3.20 A"/>
    <property type="chains" value="V=1-116"/>
</dbReference>
<dbReference type="PDB" id="8IB4">
    <property type="method" value="EM"/>
    <property type="resolution" value="4.30 A"/>
    <property type="chains" value="V=1-116"/>
</dbReference>
<dbReference type="PDB" id="8IB5">
    <property type="method" value="EM"/>
    <property type="resolution" value="3.30 A"/>
    <property type="chains" value="V=1-116"/>
</dbReference>
<dbReference type="PDB" id="8IB9">
    <property type="method" value="EM"/>
    <property type="resolution" value="4.30 A"/>
    <property type="chains" value="V=1-116"/>
</dbReference>
<dbReference type="PDB" id="8IBA">
    <property type="method" value="EM"/>
    <property type="resolution" value="3.20 A"/>
    <property type="chains" value="V=1-116"/>
</dbReference>
<dbReference type="PDB" id="8IBD">
    <property type="method" value="EM"/>
    <property type="resolution" value="4.20 A"/>
    <property type="chains" value="V=1-116"/>
</dbReference>
<dbReference type="PDB" id="8IBE">
    <property type="method" value="EM"/>
    <property type="resolution" value="3.30 A"/>
    <property type="chains" value="V=1-116"/>
</dbReference>
<dbReference type="PDB" id="8IC2">
    <property type="method" value="EM"/>
    <property type="resolution" value="6.30 A"/>
    <property type="chains" value="V=1-116"/>
</dbReference>
<dbReference type="PDB" id="8IC3">
    <property type="method" value="EM"/>
    <property type="resolution" value="3.20 A"/>
    <property type="chains" value="V=1-116"/>
</dbReference>
<dbReference type="PDB" id="8OLT">
    <property type="method" value="EM"/>
    <property type="resolution" value="2.84 A"/>
    <property type="chains" value="V=1-116"/>
</dbReference>
<dbReference type="PDB" id="8OM1">
    <property type="method" value="EM"/>
    <property type="resolution" value="2.39 A"/>
    <property type="chains" value="V=1-116"/>
</dbReference>
<dbReference type="PDB" id="8PW5">
    <property type="method" value="EM"/>
    <property type="resolution" value="3.60 A"/>
    <property type="chains" value="V1=1-116"/>
</dbReference>
<dbReference type="PDB" id="8PW6">
    <property type="method" value="EM"/>
    <property type="resolution" value="3.30 A"/>
    <property type="chains" value="V1=1-116"/>
</dbReference>
<dbReference type="PDB" id="8PW7">
    <property type="method" value="EM"/>
    <property type="resolution" value="3.50 A"/>
    <property type="chains" value="V1=1-116"/>
</dbReference>
<dbReference type="PDB" id="8RGP">
    <property type="method" value="EM"/>
    <property type="resolution" value="3.00 A"/>
    <property type="chains" value="V=1-116"/>
</dbReference>
<dbReference type="PDB" id="8RGQ">
    <property type="method" value="EM"/>
    <property type="resolution" value="3.00 A"/>
    <property type="chains" value="V=1-116"/>
</dbReference>
<dbReference type="PDB" id="8RGR">
    <property type="method" value="EM"/>
    <property type="resolution" value="2.90 A"/>
    <property type="chains" value="V=1-116"/>
</dbReference>
<dbReference type="PDB" id="8RGT">
    <property type="method" value="EM"/>
    <property type="resolution" value="3.10 A"/>
    <property type="chains" value="V=1-116"/>
</dbReference>
<dbReference type="PDB" id="8UCA">
    <property type="method" value="EM"/>
    <property type="resolution" value="3.70 A"/>
    <property type="chains" value="A5/a5=1-116"/>
</dbReference>
<dbReference type="PDB" id="8XNL">
    <property type="method" value="EM"/>
    <property type="resolution" value="3.10 A"/>
    <property type="chains" value="V=1-116"/>
</dbReference>
<dbReference type="PDB" id="8XNM">
    <property type="method" value="EM"/>
    <property type="resolution" value="3.50 A"/>
    <property type="chains" value="V=1-116"/>
</dbReference>
<dbReference type="PDB" id="8XNN">
    <property type="method" value="EM"/>
    <property type="resolution" value="3.60 A"/>
    <property type="chains" value="V=1-116"/>
</dbReference>
<dbReference type="PDB" id="8XNO">
    <property type="method" value="EM"/>
    <property type="resolution" value="3.40 A"/>
    <property type="chains" value="V=1-116"/>
</dbReference>
<dbReference type="PDB" id="8XNP">
    <property type="method" value="EM"/>
    <property type="resolution" value="3.50 A"/>
    <property type="chains" value="V=1-116"/>
</dbReference>
<dbReference type="PDB" id="8XNQ">
    <property type="method" value="EM"/>
    <property type="resolution" value="3.70 A"/>
    <property type="chains" value="V=1-116"/>
</dbReference>
<dbReference type="PDB" id="8XNR">
    <property type="method" value="EM"/>
    <property type="resolution" value="3.30 A"/>
    <property type="chains" value="V=1-116"/>
</dbReference>
<dbReference type="PDB" id="8XNS">
    <property type="method" value="EM"/>
    <property type="resolution" value="3.50 A"/>
    <property type="chains" value="V=1-116"/>
</dbReference>
<dbReference type="PDB" id="8XNT">
    <property type="method" value="EM"/>
    <property type="resolution" value="4.10 A"/>
    <property type="chains" value="V=1-116"/>
</dbReference>
<dbReference type="PDB" id="8XNU">
    <property type="method" value="EM"/>
    <property type="resolution" value="3.60 A"/>
    <property type="chains" value="V=1-116"/>
</dbReference>
<dbReference type="PDB" id="8XNV">
    <property type="method" value="EM"/>
    <property type="resolution" value="3.30 A"/>
    <property type="chains" value="V=1-116"/>
</dbReference>
<dbReference type="PDB" id="8XNW">
    <property type="method" value="EM"/>
    <property type="resolution" value="3.60 A"/>
    <property type="chains" value="V=1-116"/>
</dbReference>
<dbReference type="PDB" id="8XNX">
    <property type="method" value="EM"/>
    <property type="resolution" value="3.50 A"/>
    <property type="chains" value="V=1-116"/>
</dbReference>
<dbReference type="PDB" id="8XNY">
    <property type="method" value="EM"/>
    <property type="resolution" value="4.10 A"/>
    <property type="chains" value="V=1-116"/>
</dbReference>
<dbReference type="PDB" id="8XNZ">
    <property type="method" value="EM"/>
    <property type="resolution" value="3.30 A"/>
    <property type="chains" value="V=1-116"/>
</dbReference>
<dbReference type="PDB" id="8XO0">
    <property type="method" value="EM"/>
    <property type="resolution" value="4.20 A"/>
    <property type="chains" value="V=1-116"/>
</dbReference>
<dbReference type="PDBsum" id="6G2J"/>
<dbReference type="PDBsum" id="6G72"/>
<dbReference type="PDBsum" id="6ZR2"/>
<dbReference type="PDBsum" id="6ZTQ"/>
<dbReference type="PDBsum" id="7AK5"/>
<dbReference type="PDBsum" id="7AK6"/>
<dbReference type="PDBsum" id="7B93"/>
<dbReference type="PDBsum" id="7PSA"/>
<dbReference type="PDBsum" id="8C2S"/>
<dbReference type="PDBsum" id="8CA3"/>
<dbReference type="PDBsum" id="8CA5"/>
<dbReference type="PDBsum" id="8IAO"/>
<dbReference type="PDBsum" id="8IAP"/>
<dbReference type="PDBsum" id="8IB4"/>
<dbReference type="PDBsum" id="8IB5"/>
<dbReference type="PDBsum" id="8IB9"/>
<dbReference type="PDBsum" id="8IBA"/>
<dbReference type="PDBsum" id="8IBD"/>
<dbReference type="PDBsum" id="8IBE"/>
<dbReference type="PDBsum" id="8IC2"/>
<dbReference type="PDBsum" id="8IC3"/>
<dbReference type="PDBsum" id="8OLT"/>
<dbReference type="PDBsum" id="8OM1"/>
<dbReference type="PDBsum" id="8PW5"/>
<dbReference type="PDBsum" id="8PW6"/>
<dbReference type="PDBsum" id="8PW7"/>
<dbReference type="PDBsum" id="8RGP"/>
<dbReference type="PDBsum" id="8RGQ"/>
<dbReference type="PDBsum" id="8RGR"/>
<dbReference type="PDBsum" id="8RGT"/>
<dbReference type="PDBsum" id="8UCA"/>
<dbReference type="PDBsum" id="8XNL"/>
<dbReference type="PDBsum" id="8XNM"/>
<dbReference type="PDBsum" id="8XNN"/>
<dbReference type="PDBsum" id="8XNO"/>
<dbReference type="PDBsum" id="8XNP"/>
<dbReference type="PDBsum" id="8XNQ"/>
<dbReference type="PDBsum" id="8XNR"/>
<dbReference type="PDBsum" id="8XNS"/>
<dbReference type="PDBsum" id="8XNT"/>
<dbReference type="PDBsum" id="8XNU"/>
<dbReference type="PDBsum" id="8XNV"/>
<dbReference type="PDBsum" id="8XNW"/>
<dbReference type="PDBsum" id="8XNX"/>
<dbReference type="PDBsum" id="8XNY"/>
<dbReference type="PDBsum" id="8XNZ"/>
<dbReference type="PDBsum" id="8XO0"/>
<dbReference type="EMDB" id="EMD-11377"/>
<dbReference type="EMDB" id="EMD-11424"/>
<dbReference type="EMDB" id="EMD-11810"/>
<dbReference type="EMDB" id="EMD-11811"/>
<dbReference type="EMDB" id="EMD-12095"/>
<dbReference type="EMDB" id="EMD-13611"/>
<dbReference type="EMDB" id="EMD-16398"/>
<dbReference type="EMDB" id="EMD-16516"/>
<dbReference type="EMDB" id="EMD-16518"/>
<dbReference type="EMDB" id="EMD-16962"/>
<dbReference type="EMDB" id="EMD-16965"/>
<dbReference type="EMDB" id="EMD-17989"/>
<dbReference type="EMDB" id="EMD-17990"/>
<dbReference type="EMDB" id="EMD-17991"/>
<dbReference type="EMDB" id="EMD-19145"/>
<dbReference type="EMDB" id="EMD-19146"/>
<dbReference type="EMDB" id="EMD-19147"/>
<dbReference type="EMDB" id="EMD-19148"/>
<dbReference type="EMDB" id="EMD-35313"/>
<dbReference type="EMDB" id="EMD-35314"/>
<dbReference type="EMDB" id="EMD-35331"/>
<dbReference type="EMDB" id="EMD-35332"/>
<dbReference type="EMDB" id="EMD-35336"/>
<dbReference type="EMDB" id="EMD-35337"/>
<dbReference type="EMDB" id="EMD-35340"/>
<dbReference type="EMDB" id="EMD-35341"/>
<dbReference type="EMDB" id="EMD-35352"/>
<dbReference type="EMDB" id="EMD-35353"/>
<dbReference type="EMDB" id="EMD-38506"/>
<dbReference type="EMDB" id="EMD-38507"/>
<dbReference type="EMDB" id="EMD-38508"/>
<dbReference type="EMDB" id="EMD-38509"/>
<dbReference type="EMDB" id="EMD-38510"/>
<dbReference type="EMDB" id="EMD-38511"/>
<dbReference type="EMDB" id="EMD-38512"/>
<dbReference type="EMDB" id="EMD-38513"/>
<dbReference type="EMDB" id="EMD-38514"/>
<dbReference type="EMDB" id="EMD-38515"/>
<dbReference type="EMDB" id="EMD-38516"/>
<dbReference type="EMDB" id="EMD-38517"/>
<dbReference type="EMDB" id="EMD-38518"/>
<dbReference type="EMDB" id="EMD-38519"/>
<dbReference type="EMDB" id="EMD-38520"/>
<dbReference type="EMDB" id="EMD-38521"/>
<dbReference type="EMDB" id="EMD-42122"/>
<dbReference type="EMDB" id="EMD-4345"/>
<dbReference type="EMDB" id="EMD-4356"/>
<dbReference type="SMR" id="Q9CPP6"/>
<dbReference type="BioGRID" id="212725">
    <property type="interactions" value="70"/>
</dbReference>
<dbReference type="ComplexPortal" id="CPX-266">
    <property type="entry name" value="Mitochondrial respiratory chain complex I"/>
</dbReference>
<dbReference type="CORUM" id="Q9CPP6"/>
<dbReference type="FunCoup" id="Q9CPP6">
    <property type="interactions" value="1792"/>
</dbReference>
<dbReference type="IntAct" id="Q9CPP6">
    <property type="interactions" value="5"/>
</dbReference>
<dbReference type="STRING" id="10090.ENSMUSP00000023851"/>
<dbReference type="GlyGen" id="Q9CPP6">
    <property type="glycosylation" value="1 site, 1 O-linked glycan (1 site)"/>
</dbReference>
<dbReference type="iPTMnet" id="Q9CPP6"/>
<dbReference type="PhosphoSitePlus" id="Q9CPP6"/>
<dbReference type="SwissPalm" id="Q9CPP6"/>
<dbReference type="jPOST" id="Q9CPP6"/>
<dbReference type="PaxDb" id="10090-ENSMUSP00000023851"/>
<dbReference type="PeptideAtlas" id="Q9CPP6"/>
<dbReference type="ProteomicsDB" id="293639"/>
<dbReference type="Pumba" id="Q9CPP6"/>
<dbReference type="Antibodypedia" id="31753">
    <property type="antibodies" value="192 antibodies from 30 providers"/>
</dbReference>
<dbReference type="DNASU" id="68202"/>
<dbReference type="Ensembl" id="ENSMUST00000023851.9">
    <property type="protein sequence ID" value="ENSMUSP00000023851.6"/>
    <property type="gene ID" value="ENSMUSG00000023089.13"/>
</dbReference>
<dbReference type="GeneID" id="68202"/>
<dbReference type="KEGG" id="mmu:68202"/>
<dbReference type="UCSC" id="uc009bbs.1">
    <property type="organism name" value="mouse"/>
</dbReference>
<dbReference type="AGR" id="MGI:1915452"/>
<dbReference type="CTD" id="4698"/>
<dbReference type="MGI" id="MGI:1915452">
    <property type="gene designation" value="Ndufa5"/>
</dbReference>
<dbReference type="VEuPathDB" id="HostDB:ENSMUSG00000023089"/>
<dbReference type="eggNOG" id="KOG3365">
    <property type="taxonomic scope" value="Eukaryota"/>
</dbReference>
<dbReference type="GeneTree" id="ENSGT00390000008099"/>
<dbReference type="HOGENOM" id="CLU_099943_2_0_1"/>
<dbReference type="InParanoid" id="Q9CPP6"/>
<dbReference type="OMA" id="ENQWKWP"/>
<dbReference type="OrthoDB" id="286811at2759"/>
<dbReference type="PhylomeDB" id="Q9CPP6"/>
<dbReference type="TreeFam" id="TF313785"/>
<dbReference type="Reactome" id="R-MMU-611105">
    <property type="pathway name" value="Respiratory electron transport"/>
</dbReference>
<dbReference type="Reactome" id="R-MMU-6799198">
    <property type="pathway name" value="Complex I biogenesis"/>
</dbReference>
<dbReference type="Reactome" id="R-MMU-9013408">
    <property type="pathway name" value="RHOG GTPase cycle"/>
</dbReference>
<dbReference type="BioGRID-ORCS" id="68202">
    <property type="hits" value="18 hits in 77 CRISPR screens"/>
</dbReference>
<dbReference type="ChiTaRS" id="Ndufa5">
    <property type="organism name" value="mouse"/>
</dbReference>
<dbReference type="PRO" id="PR:Q9CPP6"/>
<dbReference type="Proteomes" id="UP000000589">
    <property type="component" value="Chromosome 6"/>
</dbReference>
<dbReference type="RNAct" id="Q9CPP6">
    <property type="molecule type" value="protein"/>
</dbReference>
<dbReference type="Bgee" id="ENSMUSG00000023089">
    <property type="expression patterns" value="Expressed in aortic valve and 270 other cell types or tissues"/>
</dbReference>
<dbReference type="ExpressionAtlas" id="Q9CPP6">
    <property type="expression patterns" value="baseline and differential"/>
</dbReference>
<dbReference type="GO" id="GO:0005743">
    <property type="term" value="C:mitochondrial inner membrane"/>
    <property type="evidence" value="ECO:0000314"/>
    <property type="project" value="UniProtKB"/>
</dbReference>
<dbReference type="GO" id="GO:0005739">
    <property type="term" value="C:mitochondrion"/>
    <property type="evidence" value="ECO:0007005"/>
    <property type="project" value="MGI"/>
</dbReference>
<dbReference type="GO" id="GO:0045271">
    <property type="term" value="C:respiratory chain complex I"/>
    <property type="evidence" value="ECO:0000314"/>
    <property type="project" value="UniProtKB"/>
</dbReference>
<dbReference type="GO" id="GO:0009060">
    <property type="term" value="P:aerobic respiration"/>
    <property type="evidence" value="ECO:0000303"/>
    <property type="project" value="ComplexPortal"/>
</dbReference>
<dbReference type="GO" id="GO:0042776">
    <property type="term" value="P:proton motive force-driven mitochondrial ATP synthesis"/>
    <property type="evidence" value="ECO:0000303"/>
    <property type="project" value="ComplexPortal"/>
</dbReference>
<dbReference type="GO" id="GO:0022904">
    <property type="term" value="P:respiratory electron transport chain"/>
    <property type="evidence" value="ECO:0000315"/>
    <property type="project" value="MGI"/>
</dbReference>
<dbReference type="InterPro" id="IPR006806">
    <property type="entry name" value="NDUFA5"/>
</dbReference>
<dbReference type="PANTHER" id="PTHR12653:SF0">
    <property type="entry name" value="NADH DEHYDROGENASE [UBIQUINONE] 1 ALPHA SUBCOMPLEX SUBUNIT 5"/>
    <property type="match status" value="1"/>
</dbReference>
<dbReference type="PANTHER" id="PTHR12653">
    <property type="entry name" value="NADH-UBIQUINONE OXIDOREDUCTASE 13 KD-B SUBUNIT"/>
    <property type="match status" value="1"/>
</dbReference>
<dbReference type="Pfam" id="PF04716">
    <property type="entry name" value="ETC_C1_NDUFA5"/>
    <property type="match status" value="1"/>
</dbReference>
<gene>
    <name type="primary">Ndufa5</name>
</gene>
<keyword id="KW-0002">3D-structure</keyword>
<keyword id="KW-0007">Acetylation</keyword>
<keyword id="KW-0903">Direct protein sequencing</keyword>
<keyword id="KW-0249">Electron transport</keyword>
<keyword id="KW-0472">Membrane</keyword>
<keyword id="KW-0496">Mitochondrion</keyword>
<keyword id="KW-0999">Mitochondrion inner membrane</keyword>
<keyword id="KW-0597">Phosphoprotein</keyword>
<keyword id="KW-1185">Reference proteome</keyword>
<keyword id="KW-0679">Respiratory chain</keyword>
<keyword id="KW-0813">Transport</keyword>
<reference key="1">
    <citation type="journal article" date="2005" name="Science">
        <title>The transcriptional landscape of the mammalian genome.</title>
        <authorList>
            <person name="Carninci P."/>
            <person name="Kasukawa T."/>
            <person name="Katayama S."/>
            <person name="Gough J."/>
            <person name="Frith M.C."/>
            <person name="Maeda N."/>
            <person name="Oyama R."/>
            <person name="Ravasi T."/>
            <person name="Lenhard B."/>
            <person name="Wells C."/>
            <person name="Kodzius R."/>
            <person name="Shimokawa K."/>
            <person name="Bajic V.B."/>
            <person name="Brenner S.E."/>
            <person name="Batalov S."/>
            <person name="Forrest A.R."/>
            <person name="Zavolan M."/>
            <person name="Davis M.J."/>
            <person name="Wilming L.G."/>
            <person name="Aidinis V."/>
            <person name="Allen J.E."/>
            <person name="Ambesi-Impiombato A."/>
            <person name="Apweiler R."/>
            <person name="Aturaliya R.N."/>
            <person name="Bailey T.L."/>
            <person name="Bansal M."/>
            <person name="Baxter L."/>
            <person name="Beisel K.W."/>
            <person name="Bersano T."/>
            <person name="Bono H."/>
            <person name="Chalk A.M."/>
            <person name="Chiu K.P."/>
            <person name="Choudhary V."/>
            <person name="Christoffels A."/>
            <person name="Clutterbuck D.R."/>
            <person name="Crowe M.L."/>
            <person name="Dalla E."/>
            <person name="Dalrymple B.P."/>
            <person name="de Bono B."/>
            <person name="Della Gatta G."/>
            <person name="di Bernardo D."/>
            <person name="Down T."/>
            <person name="Engstrom P."/>
            <person name="Fagiolini M."/>
            <person name="Faulkner G."/>
            <person name="Fletcher C.F."/>
            <person name="Fukushima T."/>
            <person name="Furuno M."/>
            <person name="Futaki S."/>
            <person name="Gariboldi M."/>
            <person name="Georgii-Hemming P."/>
            <person name="Gingeras T.R."/>
            <person name="Gojobori T."/>
            <person name="Green R.E."/>
            <person name="Gustincich S."/>
            <person name="Harbers M."/>
            <person name="Hayashi Y."/>
            <person name="Hensch T.K."/>
            <person name="Hirokawa N."/>
            <person name="Hill D."/>
            <person name="Huminiecki L."/>
            <person name="Iacono M."/>
            <person name="Ikeo K."/>
            <person name="Iwama A."/>
            <person name="Ishikawa T."/>
            <person name="Jakt M."/>
            <person name="Kanapin A."/>
            <person name="Katoh M."/>
            <person name="Kawasawa Y."/>
            <person name="Kelso J."/>
            <person name="Kitamura H."/>
            <person name="Kitano H."/>
            <person name="Kollias G."/>
            <person name="Krishnan S.P."/>
            <person name="Kruger A."/>
            <person name="Kummerfeld S.K."/>
            <person name="Kurochkin I.V."/>
            <person name="Lareau L.F."/>
            <person name="Lazarevic D."/>
            <person name="Lipovich L."/>
            <person name="Liu J."/>
            <person name="Liuni S."/>
            <person name="McWilliam S."/>
            <person name="Madan Babu M."/>
            <person name="Madera M."/>
            <person name="Marchionni L."/>
            <person name="Matsuda H."/>
            <person name="Matsuzawa S."/>
            <person name="Miki H."/>
            <person name="Mignone F."/>
            <person name="Miyake S."/>
            <person name="Morris K."/>
            <person name="Mottagui-Tabar S."/>
            <person name="Mulder N."/>
            <person name="Nakano N."/>
            <person name="Nakauchi H."/>
            <person name="Ng P."/>
            <person name="Nilsson R."/>
            <person name="Nishiguchi S."/>
            <person name="Nishikawa S."/>
            <person name="Nori F."/>
            <person name="Ohara O."/>
            <person name="Okazaki Y."/>
            <person name="Orlando V."/>
            <person name="Pang K.C."/>
            <person name="Pavan W.J."/>
            <person name="Pavesi G."/>
            <person name="Pesole G."/>
            <person name="Petrovsky N."/>
            <person name="Piazza S."/>
            <person name="Reed J."/>
            <person name="Reid J.F."/>
            <person name="Ring B.Z."/>
            <person name="Ringwald M."/>
            <person name="Rost B."/>
            <person name="Ruan Y."/>
            <person name="Salzberg S.L."/>
            <person name="Sandelin A."/>
            <person name="Schneider C."/>
            <person name="Schoenbach C."/>
            <person name="Sekiguchi K."/>
            <person name="Semple C.A."/>
            <person name="Seno S."/>
            <person name="Sessa L."/>
            <person name="Sheng Y."/>
            <person name="Shibata Y."/>
            <person name="Shimada H."/>
            <person name="Shimada K."/>
            <person name="Silva D."/>
            <person name="Sinclair B."/>
            <person name="Sperling S."/>
            <person name="Stupka E."/>
            <person name="Sugiura K."/>
            <person name="Sultana R."/>
            <person name="Takenaka Y."/>
            <person name="Taki K."/>
            <person name="Tammoja K."/>
            <person name="Tan S.L."/>
            <person name="Tang S."/>
            <person name="Taylor M.S."/>
            <person name="Tegner J."/>
            <person name="Teichmann S.A."/>
            <person name="Ueda H.R."/>
            <person name="van Nimwegen E."/>
            <person name="Verardo R."/>
            <person name="Wei C.L."/>
            <person name="Yagi K."/>
            <person name="Yamanishi H."/>
            <person name="Zabarovsky E."/>
            <person name="Zhu S."/>
            <person name="Zimmer A."/>
            <person name="Hide W."/>
            <person name="Bult C."/>
            <person name="Grimmond S.M."/>
            <person name="Teasdale R.D."/>
            <person name="Liu E.T."/>
            <person name="Brusic V."/>
            <person name="Quackenbush J."/>
            <person name="Wahlestedt C."/>
            <person name="Mattick J.S."/>
            <person name="Hume D.A."/>
            <person name="Kai C."/>
            <person name="Sasaki D."/>
            <person name="Tomaru Y."/>
            <person name="Fukuda S."/>
            <person name="Kanamori-Katayama M."/>
            <person name="Suzuki M."/>
            <person name="Aoki J."/>
            <person name="Arakawa T."/>
            <person name="Iida J."/>
            <person name="Imamura K."/>
            <person name="Itoh M."/>
            <person name="Kato T."/>
            <person name="Kawaji H."/>
            <person name="Kawagashira N."/>
            <person name="Kawashima T."/>
            <person name="Kojima M."/>
            <person name="Kondo S."/>
            <person name="Konno H."/>
            <person name="Nakano K."/>
            <person name="Ninomiya N."/>
            <person name="Nishio T."/>
            <person name="Okada M."/>
            <person name="Plessy C."/>
            <person name="Shibata K."/>
            <person name="Shiraki T."/>
            <person name="Suzuki S."/>
            <person name="Tagami M."/>
            <person name="Waki K."/>
            <person name="Watahiki A."/>
            <person name="Okamura-Oho Y."/>
            <person name="Suzuki H."/>
            <person name="Kawai J."/>
            <person name="Hayashizaki Y."/>
        </authorList>
    </citation>
    <scope>NUCLEOTIDE SEQUENCE [LARGE SCALE MRNA]</scope>
    <source>
        <strain>C57BL/6J</strain>
        <tissue>Embryo</tissue>
        <tissue>Hippocampus</tissue>
        <tissue>Small intestine</tissue>
        <tissue>Tongue</tissue>
    </source>
</reference>
<reference key="2">
    <citation type="journal article" date="2004" name="Genome Res.">
        <title>The status, quality, and expansion of the NIH full-length cDNA project: the Mammalian Gene Collection (MGC).</title>
        <authorList>
            <consortium name="The MGC Project Team"/>
        </authorList>
    </citation>
    <scope>NUCLEOTIDE SEQUENCE [LARGE SCALE MRNA]</scope>
    <source>
        <tissue>Mammary gland</tissue>
    </source>
</reference>
<reference key="3">
    <citation type="submission" date="2007-04" db="UniProtKB">
        <authorList>
            <person name="Lubec G."/>
            <person name="Kang S.U."/>
        </authorList>
    </citation>
    <scope>PROTEIN SEQUENCE OF 8-30; 47-60 AND 67-86</scope>
    <scope>IDENTIFICATION BY MASS SPECTROMETRY</scope>
    <source>
        <strain>C57BL/6J</strain>
        <tissue>Brain</tissue>
    </source>
</reference>
<reference key="4">
    <citation type="journal article" date="2006" name="Mol. Cell. Proteomics">
        <title>Comprehensive identification of phosphorylation sites in postsynaptic density preparations.</title>
        <authorList>
            <person name="Trinidad J.C."/>
            <person name="Specht C.G."/>
            <person name="Thalhammer A."/>
            <person name="Schoepfer R."/>
            <person name="Burlingame A.L."/>
        </authorList>
    </citation>
    <scope>IDENTIFICATION BY MASS SPECTROMETRY [LARGE SCALE ANALYSIS]</scope>
    <source>
        <tissue>Brain</tissue>
    </source>
</reference>
<reference key="5">
    <citation type="journal article" date="2010" name="Cell">
        <title>A tissue-specific atlas of mouse protein phosphorylation and expression.</title>
        <authorList>
            <person name="Huttlin E.L."/>
            <person name="Jedrychowski M.P."/>
            <person name="Elias J.E."/>
            <person name="Goswami T."/>
            <person name="Rad R."/>
            <person name="Beausoleil S.A."/>
            <person name="Villen J."/>
            <person name="Haas W."/>
            <person name="Sowa M.E."/>
            <person name="Gygi S.P."/>
        </authorList>
    </citation>
    <scope>IDENTIFICATION BY MASS SPECTROMETRY [LARGE SCALE ANALYSIS]</scope>
    <source>
        <tissue>Brain</tissue>
        <tissue>Brown adipose tissue</tissue>
        <tissue>Heart</tissue>
        <tissue>Kidney</tissue>
        <tissue>Liver</tissue>
        <tissue>Lung</tissue>
        <tissue>Pancreas</tissue>
        <tissue>Spleen</tissue>
        <tissue>Testis</tissue>
    </source>
</reference>
<reference key="6">
    <citation type="journal article" date="2013" name="Mol. Cell">
        <title>SIRT5-mediated lysine desuccinylation impacts diverse metabolic pathways.</title>
        <authorList>
            <person name="Park J."/>
            <person name="Chen Y."/>
            <person name="Tishkoff D.X."/>
            <person name="Peng C."/>
            <person name="Tan M."/>
            <person name="Dai L."/>
            <person name="Xie Z."/>
            <person name="Zhang Y."/>
            <person name="Zwaans B.M."/>
            <person name="Skinner M.E."/>
            <person name="Lombard D.B."/>
            <person name="Zhao Y."/>
        </authorList>
    </citation>
    <scope>SUCCINYLATION [LARGE SCALE ANALYSIS] AT LYS-98</scope>
    <scope>IDENTIFICATION BY MASS SPECTROMETRY [LARGE SCALE ANALYSIS]</scope>
    <source>
        <tissue>Liver</tissue>
    </source>
</reference>
<reference key="7">
    <citation type="journal article" date="2013" name="Proc. Natl. Acad. Sci. U.S.A.">
        <title>Label-free quantitative proteomics of the lysine acetylome in mitochondria identifies substrates of SIRT3 in metabolic pathways.</title>
        <authorList>
            <person name="Rardin M.J."/>
            <person name="Newman J.C."/>
            <person name="Held J.M."/>
            <person name="Cusack M.P."/>
            <person name="Sorensen D.J."/>
            <person name="Li B."/>
            <person name="Schilling B."/>
            <person name="Mooney S.D."/>
            <person name="Kahn C.R."/>
            <person name="Verdin E."/>
            <person name="Gibson B.W."/>
        </authorList>
    </citation>
    <scope>ACETYLATION [LARGE SCALE ANALYSIS] AT LYS-36; LYS-46 AND LYS-98</scope>
    <scope>IDENTIFICATION BY MASS SPECTROMETRY [LARGE SCALE ANALYSIS]</scope>
    <source>
        <tissue>Liver</tissue>
    </source>
</reference>
<reference key="8">
    <citation type="journal article" date="2014" name="Hum. Mol. Genet.">
        <title>Partial complex I deficiency due to the CNS conditional ablation of Ndufa5 results in a mild chronic encephalopathy but no increase in oxidative damage.</title>
        <authorList>
            <person name="Peralta S."/>
            <person name="Torraco A."/>
            <person name="Wenz T."/>
            <person name="Garcia S."/>
            <person name="Diaz F."/>
            <person name="Moraes C.T."/>
        </authorList>
    </citation>
    <scope>FUNCTION</scope>
    <scope>DISRUPTION PHENOTYPE</scope>
</reference>
<reference evidence="7" key="9">
    <citation type="journal article" date="2024" name="Nat. Struct. Mol. Biol.">
        <title>SCAF1 drives the compositional diversity of mammalian respirasomes.</title>
        <authorList>
            <person name="Vercellino I."/>
            <person name="Sazanov L.A."/>
        </authorList>
    </citation>
    <scope>STRUCTURE BY ELECTRON MICROSCOPY (3.60 ANGSTROMS) IN COMPLEX WITH MITOCHONDRIAL RESPIRATORY SUPERCOMPLEX</scope>
    <scope>FUNCTION</scope>
    <scope>SUBCELLULAR LOCATION</scope>
    <scope>SUBUNIT</scope>
</reference>
<proteinExistence type="evidence at protein level"/>
<comment type="function">
    <text evidence="4 5">Accessory subunit of the mitochondrial membrane respiratory chain NADH dehydrogenase (Complex I), that is believed not to be involved in catalysis. Complex I functions in the transfer of electrons from NADH to the respiratory chain. The immediate electron acceptor for the enzyme is believed to be ubiquinone.</text>
</comment>
<comment type="subunit">
    <text evidence="5">Complex I is composed of 45 different subunits.</text>
</comment>
<comment type="subcellular location">
    <subcellularLocation>
        <location evidence="5">Mitochondrion inner membrane</location>
        <topology evidence="5">Peripheral membrane protein</topology>
        <orientation evidence="5">Matrix side</orientation>
    </subcellularLocation>
</comment>
<comment type="PTM">
    <text>Acetylation of Lys-98 is observed in liver mitochondria from fasted mice but not from fed mice.</text>
</comment>
<comment type="disruption phenotype">
    <text evidence="4">Lethality around embryonic day 9 (E9). Conditional knockout in the central nervous system does not lead to any visible phenotype until mice reach 10-11 months of age: then mice become lethargic, lose motor control and have difficulty maintaining balance. Defects cause loss of other complex I subunits and reduced NADH dehydrogenase activity.</text>
</comment>
<comment type="similarity">
    <text evidence="6">Belongs to the complex I NDUFA5 subunit family.</text>
</comment>
<feature type="initiator methionine" description="Removed" evidence="1">
    <location>
        <position position="1"/>
    </location>
</feature>
<feature type="chain" id="PRO_0000118633" description="NADH dehydrogenase [ubiquinone] 1 alpha subcomplex subunit 5">
    <location>
        <begin position="2"/>
        <end position="116"/>
    </location>
</feature>
<feature type="modified residue" description="N-acetylalanine" evidence="1">
    <location>
        <position position="2"/>
    </location>
</feature>
<feature type="modified residue" description="N6-acetyllysine" evidence="2">
    <location>
        <position position="30"/>
    </location>
</feature>
<feature type="modified residue" description="N6-acetyllysine" evidence="8">
    <location>
        <position position="36"/>
    </location>
</feature>
<feature type="modified residue" description="N6-acetyllysine" evidence="8">
    <location>
        <position position="46"/>
    </location>
</feature>
<feature type="modified residue" description="N6-acetyllysine" evidence="2">
    <location>
        <position position="60"/>
    </location>
</feature>
<feature type="modified residue" description="Phosphoserine" evidence="3">
    <location>
        <position position="89"/>
    </location>
</feature>
<feature type="modified residue" description="N6-acetyllysine; alternate" evidence="8">
    <location>
        <position position="98"/>
    </location>
</feature>
<feature type="modified residue" description="N6-succinyllysine; alternate" evidence="9">
    <location>
        <position position="98"/>
    </location>
</feature>
<feature type="sequence conflict" description="In Ref. 1; BAB31682." evidence="6" ref="1">
    <original>K</original>
    <variation>E</variation>
    <location>
        <position position="93"/>
    </location>
</feature>
<feature type="sequence conflict" description="In Ref. 1; BAB26496." evidence="6" ref="1">
    <original>K</original>
    <variation>E</variation>
    <location>
        <position position="98"/>
    </location>
</feature>
<feature type="sequence conflict" description="In Ref. 1; BAB31622." evidence="6" ref="1">
    <original>E</original>
    <variation>A</variation>
    <location>
        <position position="101"/>
    </location>
</feature>
<feature type="sequence conflict" description="In Ref. 1; BAB26409." evidence="6" ref="1">
    <original>K</original>
    <variation>N</variation>
    <location>
        <position position="113"/>
    </location>
</feature>
<feature type="strand" evidence="11">
    <location>
        <begin position="10"/>
        <end position="13"/>
    </location>
</feature>
<feature type="helix" evidence="12">
    <location>
        <begin position="20"/>
        <end position="35"/>
    </location>
</feature>
<feature type="helix" evidence="12">
    <location>
        <begin position="43"/>
        <end position="61"/>
    </location>
</feature>
<feature type="helix" evidence="12">
    <location>
        <begin position="65"/>
        <end position="72"/>
    </location>
</feature>
<feature type="strand" evidence="12">
    <location>
        <begin position="74"/>
        <end position="76"/>
    </location>
</feature>
<feature type="helix" evidence="12">
    <location>
        <begin position="77"/>
        <end position="97"/>
    </location>
</feature>
<feature type="strand" evidence="10">
    <location>
        <begin position="101"/>
        <end position="103"/>
    </location>
</feature>
<feature type="turn" evidence="12">
    <location>
        <begin position="109"/>
        <end position="112"/>
    </location>
</feature>
<sequence>MAGLLKKTTGLVGLAVCDTPHERLTILYTKTLDILKHFPKHAAYRKYTEQITNEKLDMVKAEPDVKKLEALLQGGEVEEVILQAEKELSLARKMLKWKPWEPLVEEPPANQWKWPI</sequence>
<organism>
    <name type="scientific">Mus musculus</name>
    <name type="common">Mouse</name>
    <dbReference type="NCBI Taxonomy" id="10090"/>
    <lineage>
        <taxon>Eukaryota</taxon>
        <taxon>Metazoa</taxon>
        <taxon>Chordata</taxon>
        <taxon>Craniata</taxon>
        <taxon>Vertebrata</taxon>
        <taxon>Euteleostomi</taxon>
        <taxon>Mammalia</taxon>
        <taxon>Eutheria</taxon>
        <taxon>Euarchontoglires</taxon>
        <taxon>Glires</taxon>
        <taxon>Rodentia</taxon>
        <taxon>Myomorpha</taxon>
        <taxon>Muroidea</taxon>
        <taxon>Muridae</taxon>
        <taxon>Murinae</taxon>
        <taxon>Mus</taxon>
        <taxon>Mus</taxon>
    </lineage>
</organism>
<accession>Q9CPP6</accession>
<accession>Q9CY90</accession>
<accession>Q9D2P2</accession>
<accession>Q9D703</accession>
<accession>Q9D739</accession>
<protein>
    <recommendedName>
        <fullName>NADH dehydrogenase [ubiquinone] 1 alpha subcomplex subunit 5</fullName>
    </recommendedName>
    <alternativeName>
        <fullName>Complex I subunit B13</fullName>
    </alternativeName>
    <alternativeName>
        <fullName>Complex I-13kD-B</fullName>
        <shortName>CI-13kD-B</shortName>
    </alternativeName>
    <alternativeName>
        <fullName>NADH-ubiquinone oxidoreductase 13 kDa-B subunit</fullName>
    </alternativeName>
</protein>